<keyword id="KW-0067">ATP-binding</keyword>
<keyword id="KW-0238">DNA-binding</keyword>
<keyword id="KW-0324">Glycolysis</keyword>
<keyword id="KW-0418">Kinase</keyword>
<keyword id="KW-0472">Membrane</keyword>
<keyword id="KW-0511">Multifunctional enzyme</keyword>
<keyword id="KW-0547">Nucleotide-binding</keyword>
<keyword id="KW-0804">Transcription</keyword>
<keyword id="KW-0805">Transcription regulation</keyword>
<keyword id="KW-0808">Transferase</keyword>
<keyword id="KW-0812">Transmembrane</keyword>
<keyword id="KW-1133">Transmembrane helix</keyword>
<comment type="catalytic activity">
    <reaction>
        <text>D-glucose + ATP = D-glucose 6-phosphate + ADP + H(+)</text>
        <dbReference type="Rhea" id="RHEA:17825"/>
        <dbReference type="ChEBI" id="CHEBI:4167"/>
        <dbReference type="ChEBI" id="CHEBI:15378"/>
        <dbReference type="ChEBI" id="CHEBI:30616"/>
        <dbReference type="ChEBI" id="CHEBI:61548"/>
        <dbReference type="ChEBI" id="CHEBI:456216"/>
        <dbReference type="EC" id="2.7.1.2"/>
    </reaction>
</comment>
<comment type="subcellular location">
    <subcellularLocation>
        <location evidence="3">Membrane</location>
        <topology evidence="3">Single-pass membrane protein</topology>
    </subcellularLocation>
</comment>
<comment type="similarity">
    <text evidence="3">In the N-terminal section; belongs to the bacterial glucokinase family.</text>
</comment>
<sequence>MSTGAQSKAVVAGQHADGPRLLADVGGTNARFALETGPGEITQIRVYPGADYPTITDAIRKYLKDVKISRVNHAAIAIANPVDGDQVTMTNHDWSFSIEATRRALGFDTLLVVNDFTALAMALPGLTDAQRVQVGGGARRQNSVIGLLGPGTGLGVSGLIPADDRWIALGSEGGHASFAPQDEREDLVLQYARKKFPHVSFERVCAGPGMEIIYRALAARDKKRVAATVDTVEIVERAHAGDALALETVECFCGILGAFAGSVALTLGALGGVYIGGGVALKLGELFTRSSFRARFEAKGRFTHYLENIPTYLITAEYPAFLGVSAILAEQLSNRSGGASSAVFERIRQMRDALTPAERRVADLALNHPRSIINDPIVDIARKADVSQPTVIRFCRSLGCQGLSDFKLKLATGLTGTIPMSHSQVHLGDTATDFGAKVLDNTVSAILQLREHLNFEHVENAIEILNGARRIEFYGLGNSNIVAQDAHYKFFRFGIPTIAYGDLYMQAASAALLGKGDVIVAVSKSGRAPELLRVLDVAMQAGAKVIAITSSNTPLAKRATVALETDHIEMRESQLSMISRILHLLMIDILAVGVAIRRASTNGELPEAVAQAKARASDDETADVLDWLSHGASPAAKDVARD</sequence>
<evidence type="ECO:0000250" key="1"/>
<evidence type="ECO:0000255" key="2"/>
<evidence type="ECO:0000305" key="3"/>
<proteinExistence type="inferred from homology"/>
<organism>
    <name type="scientific">Burkholderia orbicola (strain AU 1054)</name>
    <dbReference type="NCBI Taxonomy" id="331271"/>
    <lineage>
        <taxon>Bacteria</taxon>
        <taxon>Pseudomonadati</taxon>
        <taxon>Pseudomonadota</taxon>
        <taxon>Betaproteobacteria</taxon>
        <taxon>Burkholderiales</taxon>
        <taxon>Burkholderiaceae</taxon>
        <taxon>Burkholderia</taxon>
        <taxon>Burkholderia cepacia complex</taxon>
        <taxon>Burkholderia orbicola</taxon>
    </lineage>
</organism>
<name>GLK_BURO1</name>
<protein>
    <recommendedName>
        <fullName>Bifunctional protein glk</fullName>
    </recommendedName>
    <domain>
        <recommendedName>
            <fullName>Glucokinase</fullName>
            <ecNumber>2.7.1.2</ecNumber>
        </recommendedName>
        <alternativeName>
            <fullName>Glucose kinase</fullName>
        </alternativeName>
    </domain>
    <domain>
        <recommendedName>
            <fullName>Putative HTH-type transcriptional regulator</fullName>
        </recommendedName>
    </domain>
</protein>
<accession>Q1BYA7</accession>
<reference key="1">
    <citation type="submission" date="2006-05" db="EMBL/GenBank/DDBJ databases">
        <title>Complete sequence of chromosome 1 of Burkholderia cenocepacia AU 1054.</title>
        <authorList>
            <consortium name="US DOE Joint Genome Institute"/>
            <person name="Copeland A."/>
            <person name="Lucas S."/>
            <person name="Lapidus A."/>
            <person name="Barry K."/>
            <person name="Detter J.C."/>
            <person name="Glavina del Rio T."/>
            <person name="Hammon N."/>
            <person name="Israni S."/>
            <person name="Dalin E."/>
            <person name="Tice H."/>
            <person name="Pitluck S."/>
            <person name="Chain P."/>
            <person name="Malfatti S."/>
            <person name="Shin M."/>
            <person name="Vergez L."/>
            <person name="Schmutz J."/>
            <person name="Larimer F."/>
            <person name="Land M."/>
            <person name="Hauser L."/>
            <person name="Kyrpides N."/>
            <person name="Lykidis A."/>
            <person name="LiPuma J.J."/>
            <person name="Konstantinidis K."/>
            <person name="Tiedje J.M."/>
            <person name="Richardson P."/>
        </authorList>
    </citation>
    <scope>NUCLEOTIDE SEQUENCE [LARGE SCALE GENOMIC DNA]</scope>
    <source>
        <strain>AU 1054</strain>
    </source>
</reference>
<feature type="chain" id="PRO_0000268796" description="Bifunctional protein glk">
    <location>
        <begin position="1"/>
        <end position="642"/>
    </location>
</feature>
<feature type="transmembrane region" description="Helical" evidence="2">
    <location>
        <begin position="576"/>
        <end position="596"/>
    </location>
</feature>
<feature type="domain" description="HTH rpiR-type">
    <location>
        <begin position="341"/>
        <end position="417"/>
    </location>
</feature>
<feature type="domain" description="SIS">
    <location>
        <begin position="461"/>
        <end position="600"/>
    </location>
</feature>
<feature type="DNA-binding region" description="H-T-H motif" evidence="1">
    <location>
        <begin position="377"/>
        <end position="396"/>
    </location>
</feature>
<feature type="region of interest" description="Glucokinase">
    <location>
        <begin position="1"/>
        <end position="340"/>
    </location>
</feature>
<feature type="region of interest" description="Putative HTH-type transcriptional regulator">
    <location>
        <begin position="341"/>
        <end position="642"/>
    </location>
</feature>
<feature type="binding site" evidence="2">
    <location>
        <begin position="23"/>
        <end position="28"/>
    </location>
    <ligand>
        <name>ATP</name>
        <dbReference type="ChEBI" id="CHEBI:30616"/>
    </ligand>
</feature>
<dbReference type="EC" id="2.7.1.2"/>
<dbReference type="EMBL" id="CP000378">
    <property type="protein sequence ID" value="ABF75398.1"/>
    <property type="molecule type" value="Genomic_DNA"/>
</dbReference>
<dbReference type="SMR" id="Q1BYA7"/>
<dbReference type="HOGENOM" id="CLU_016801_0_0_4"/>
<dbReference type="GO" id="GO:0005829">
    <property type="term" value="C:cytosol"/>
    <property type="evidence" value="ECO:0007669"/>
    <property type="project" value="TreeGrafter"/>
</dbReference>
<dbReference type="GO" id="GO:0016020">
    <property type="term" value="C:membrane"/>
    <property type="evidence" value="ECO:0007669"/>
    <property type="project" value="UniProtKB-SubCell"/>
</dbReference>
<dbReference type="GO" id="GO:0005524">
    <property type="term" value="F:ATP binding"/>
    <property type="evidence" value="ECO:0007669"/>
    <property type="project" value="UniProtKB-UniRule"/>
</dbReference>
<dbReference type="GO" id="GO:0005536">
    <property type="term" value="F:D-glucose binding"/>
    <property type="evidence" value="ECO:0007669"/>
    <property type="project" value="InterPro"/>
</dbReference>
<dbReference type="GO" id="GO:0003677">
    <property type="term" value="F:DNA binding"/>
    <property type="evidence" value="ECO:0007669"/>
    <property type="project" value="UniProtKB-KW"/>
</dbReference>
<dbReference type="GO" id="GO:0003700">
    <property type="term" value="F:DNA-binding transcription factor activity"/>
    <property type="evidence" value="ECO:0007669"/>
    <property type="project" value="InterPro"/>
</dbReference>
<dbReference type="GO" id="GO:0004340">
    <property type="term" value="F:glucokinase activity"/>
    <property type="evidence" value="ECO:0007669"/>
    <property type="project" value="UniProtKB-UniRule"/>
</dbReference>
<dbReference type="GO" id="GO:0006096">
    <property type="term" value="P:glycolytic process"/>
    <property type="evidence" value="ECO:0007669"/>
    <property type="project" value="UniProtKB-UniRule"/>
</dbReference>
<dbReference type="CDD" id="cd24008">
    <property type="entry name" value="ASKHA_NBD_GLK"/>
    <property type="match status" value="1"/>
</dbReference>
<dbReference type="CDD" id="cd05013">
    <property type="entry name" value="SIS_RpiR"/>
    <property type="match status" value="1"/>
</dbReference>
<dbReference type="Gene3D" id="3.30.420.40">
    <property type="match status" value="1"/>
</dbReference>
<dbReference type="Gene3D" id="3.40.367.20">
    <property type="match status" value="1"/>
</dbReference>
<dbReference type="Gene3D" id="3.40.50.10490">
    <property type="entry name" value="Glucose-6-phosphate isomerase like protein, domain 1"/>
    <property type="match status" value="1"/>
</dbReference>
<dbReference type="Gene3D" id="1.10.10.10">
    <property type="entry name" value="Winged helix-like DNA-binding domain superfamily/Winged helix DNA-binding domain"/>
    <property type="match status" value="1"/>
</dbReference>
<dbReference type="HAMAP" id="MF_00524">
    <property type="entry name" value="Glucokinase"/>
    <property type="match status" value="1"/>
</dbReference>
<dbReference type="InterPro" id="IPR043129">
    <property type="entry name" value="ATPase_NBD"/>
</dbReference>
<dbReference type="InterPro" id="IPR050201">
    <property type="entry name" value="Bacterial_glucokinase"/>
</dbReference>
<dbReference type="InterPro" id="IPR003836">
    <property type="entry name" value="Glucokinase"/>
</dbReference>
<dbReference type="InterPro" id="IPR009057">
    <property type="entry name" value="Homeodomain-like_sf"/>
</dbReference>
<dbReference type="InterPro" id="IPR000281">
    <property type="entry name" value="HTH_RpiR"/>
</dbReference>
<dbReference type="InterPro" id="IPR035472">
    <property type="entry name" value="RpiR-like_SIS"/>
</dbReference>
<dbReference type="InterPro" id="IPR001347">
    <property type="entry name" value="SIS_dom"/>
</dbReference>
<dbReference type="InterPro" id="IPR046348">
    <property type="entry name" value="SIS_dom_sf"/>
</dbReference>
<dbReference type="InterPro" id="IPR036388">
    <property type="entry name" value="WH-like_DNA-bd_sf"/>
</dbReference>
<dbReference type="NCBIfam" id="TIGR00749">
    <property type="entry name" value="glk"/>
    <property type="match status" value="1"/>
</dbReference>
<dbReference type="NCBIfam" id="NF001416">
    <property type="entry name" value="PRK00292.1-3"/>
    <property type="match status" value="1"/>
</dbReference>
<dbReference type="NCBIfam" id="NF010701">
    <property type="entry name" value="PRK14101.1"/>
    <property type="match status" value="1"/>
</dbReference>
<dbReference type="PANTHER" id="PTHR47690">
    <property type="entry name" value="GLUCOKINASE"/>
    <property type="match status" value="1"/>
</dbReference>
<dbReference type="PANTHER" id="PTHR47690:SF1">
    <property type="entry name" value="GLUCOKINASE"/>
    <property type="match status" value="1"/>
</dbReference>
<dbReference type="Pfam" id="PF02685">
    <property type="entry name" value="Glucokinase"/>
    <property type="match status" value="1"/>
</dbReference>
<dbReference type="Pfam" id="PF01418">
    <property type="entry name" value="HTH_6"/>
    <property type="match status" value="1"/>
</dbReference>
<dbReference type="Pfam" id="PF01380">
    <property type="entry name" value="SIS"/>
    <property type="match status" value="1"/>
</dbReference>
<dbReference type="SUPFAM" id="SSF53067">
    <property type="entry name" value="Actin-like ATPase domain"/>
    <property type="match status" value="1"/>
</dbReference>
<dbReference type="SUPFAM" id="SSF46689">
    <property type="entry name" value="Homeodomain-like"/>
    <property type="match status" value="1"/>
</dbReference>
<dbReference type="SUPFAM" id="SSF53697">
    <property type="entry name" value="SIS domain"/>
    <property type="match status" value="1"/>
</dbReference>
<dbReference type="PROSITE" id="PS00356">
    <property type="entry name" value="HTH_LACI_1"/>
    <property type="match status" value="1"/>
</dbReference>
<dbReference type="PROSITE" id="PS51071">
    <property type="entry name" value="HTH_RPIR"/>
    <property type="match status" value="1"/>
</dbReference>
<dbReference type="PROSITE" id="PS51464">
    <property type="entry name" value="SIS"/>
    <property type="match status" value="1"/>
</dbReference>
<gene>
    <name type="primary">glk</name>
    <name type="ordered locus">Bcen_0486</name>
</gene>